<evidence type="ECO:0000250" key="1"/>
<evidence type="ECO:0000255" key="2"/>
<evidence type="ECO:0000255" key="3">
    <source>
        <dbReference type="PROSITE-ProRule" id="PRU10040"/>
    </source>
</evidence>
<evidence type="ECO:0000269" key="4">
    <source>
    </source>
</evidence>
<evidence type="ECO:0000269" key="5">
    <source>
    </source>
</evidence>
<evidence type="ECO:0000269" key="6">
    <source>
    </source>
</evidence>
<evidence type="ECO:0000305" key="7"/>
<accession>P83947</accession>
<sequence>MEINQPNLLEASKSCYSKITFFLLVISFAALVSTGFSSPELSLHHKICDQSVNKESCLAMISEVTGLNMADHRNLLKSFLEKTTPRIQKAFETANDASRRINNPQERTALLDCAELMDLSKERVVDSISILFHQNLTTRSHEDLHVWLSGVLTNHVTCLDGLEEGSTDYIKTLMESHLNELILRARTSLAIFVTLFPAKSNVIEPVTGNFPTWVTAGDRRLLQTLGKDIEPDIVVAKDGSGDYETLNEAVAAIPDNSKKRVIVLVRTGIYEENVDFGYQKKNVMLVGEGMDYTIITGSRNVVDGSTTFDSATVAAVGDGFIAQDICFQNTAGPEKYQAVALRIGADETVINRCRIDAYQDTLYPHNYRQFYRDRNITGTVDFIFGNAAVVFQNCNLIPRKQMKGQENTITAQGRTDPNQNTGTSIQNCEIFASADLEPVEDTFKSYLGRPWKEYSRTVVMESYISDVIDPAGWLEWDRDFALKTLFYGEYRNGGPGSGTSERVKWPGYHVITSPEVAEQFTVAELIQGGSWLGSTGVDYTAGLYA</sequence>
<feature type="signal peptide" evidence="2">
    <location>
        <begin position="1"/>
        <end position="37"/>
    </location>
</feature>
<feature type="propeptide" id="PRO_0000023484" evidence="4 6">
    <location>
        <begin position="38"/>
        <end position="228"/>
    </location>
</feature>
<feature type="chain" id="PRO_0000023485" description="Pectinesterase/pectinesterase inhibitor">
    <location>
        <begin position="229"/>
        <end position="545"/>
    </location>
</feature>
<feature type="region of interest" description="Pectinesterase inhibitor">
    <location>
        <begin position="38"/>
        <end position="191"/>
    </location>
</feature>
<feature type="region of interest" description="Pectinesterase">
    <location>
        <begin position="232"/>
        <end position="530"/>
    </location>
</feature>
<feature type="active site" description="Proton donor; for pectinesterase activity" evidence="3">
    <location>
        <position position="360"/>
    </location>
</feature>
<feature type="active site" description="Nucleophile; for pectinesterase activity" evidence="3">
    <location>
        <position position="381"/>
    </location>
</feature>
<feature type="binding site" evidence="1">
    <location>
        <position position="307"/>
    </location>
    <ligand>
        <name>substrate</name>
        <note>for pectinesterase activity</note>
    </ligand>
</feature>
<feature type="binding site" evidence="1">
    <location>
        <position position="337"/>
    </location>
    <ligand>
        <name>substrate</name>
        <note>for pectinesterase activity</note>
    </ligand>
</feature>
<feature type="binding site" evidence="1">
    <location>
        <position position="449"/>
    </location>
    <ligand>
        <name>substrate</name>
        <note>for pectinesterase activity</note>
    </ligand>
</feature>
<feature type="binding site" evidence="1">
    <location>
        <position position="451"/>
    </location>
    <ligand>
        <name>substrate</name>
        <note>for pectinesterase activity</note>
    </ligand>
</feature>
<feature type="site" description="Transition state stabilizer" evidence="1">
    <location>
        <position position="359"/>
    </location>
</feature>
<feature type="glycosylation site" description="N-linked (GlcNAc...) asparagine" evidence="2">
    <location>
        <position position="135"/>
    </location>
</feature>
<feature type="glycosylation site" description="N-linked (GlcNAc...) (complex) asparagine" evidence="5">
    <location>
        <position position="375"/>
    </location>
</feature>
<feature type="disulfide bond" evidence="1">
    <location>
        <begin position="326"/>
        <end position="353"/>
    </location>
</feature>
<feature type="disulfide bond" evidence="1">
    <location>
        <begin position="394"/>
        <end position="428"/>
    </location>
</feature>
<feature type="sequence conflict" description="In Ref. 2; AA sequence." evidence="7" ref="2">
    <original>A</original>
    <variation>H</variation>
    <location>
        <position position="249"/>
    </location>
</feature>
<feature type="sequence conflict" description="In Ref. 2; AA sequence." evidence="7" ref="2">
    <original>D</original>
    <variation>N</variation>
    <location>
        <position position="255"/>
    </location>
</feature>
<proteinExistence type="evidence at protein level"/>
<name>PME1_FICPW</name>
<protein>
    <recommendedName>
        <fullName>Pectinesterase/pectinesterase inhibitor</fullName>
    </recommendedName>
    <domain>
        <recommendedName>
            <fullName>Pectinesterase inhibitor</fullName>
        </recommendedName>
        <alternativeName>
            <fullName>Pectin methylesterase inhibitor</fullName>
        </alternativeName>
    </domain>
    <domain>
        <recommendedName>
            <fullName>Pectinesterase</fullName>
            <shortName>PE</shortName>
            <ecNumber>3.1.1.11</ecNumber>
        </recommendedName>
        <alternativeName>
            <fullName>Pectin methylesterase</fullName>
        </alternativeName>
    </domain>
</protein>
<comment type="function">
    <text evidence="1">Acts in the modification of cell walls via demethylesterification of cell wall pectin.</text>
</comment>
<comment type="catalytic activity">
    <reaction evidence="5 6">
        <text>[(1-&gt;4)-alpha-D-galacturonosyl methyl ester](n) + n H2O = [(1-&gt;4)-alpha-D-galacturonosyl](n) + n methanol + n H(+)</text>
        <dbReference type="Rhea" id="RHEA:22380"/>
        <dbReference type="Rhea" id="RHEA-COMP:14570"/>
        <dbReference type="Rhea" id="RHEA-COMP:14573"/>
        <dbReference type="ChEBI" id="CHEBI:15377"/>
        <dbReference type="ChEBI" id="CHEBI:15378"/>
        <dbReference type="ChEBI" id="CHEBI:17790"/>
        <dbReference type="ChEBI" id="CHEBI:140522"/>
        <dbReference type="ChEBI" id="CHEBI:140523"/>
        <dbReference type="EC" id="3.1.1.11"/>
    </reaction>
</comment>
<comment type="pathway">
    <text>Glycan metabolism; pectin degradation; 2-dehydro-3-deoxy-D-gluconate from pectin: step 1/5.</text>
</comment>
<comment type="subcellular location">
    <subcellularLocation>
        <location evidence="7">Secreted</location>
        <location evidence="7">Cell wall</location>
    </subcellularLocation>
</comment>
<comment type="PTM">
    <text evidence="5">N-glycosylated.</text>
</comment>
<comment type="miscellaneous">
    <text>The PMEI region may act as an autoinhibitory domain and prevent untimely PME activity during transport.</text>
</comment>
<comment type="similarity">
    <text evidence="7">In the N-terminal section; belongs to the PMEI family.</text>
</comment>
<comment type="similarity">
    <text evidence="7">In the C-terminal section; belongs to the pectinesterase family.</text>
</comment>
<dbReference type="EC" id="3.1.1.11"/>
<dbReference type="SMR" id="P83947"/>
<dbReference type="iPTMnet" id="P83947"/>
<dbReference type="UniPathway" id="UPA00545">
    <property type="reaction ID" value="UER00823"/>
</dbReference>
<dbReference type="GO" id="GO:0005576">
    <property type="term" value="C:extracellular region"/>
    <property type="evidence" value="ECO:0007669"/>
    <property type="project" value="UniProtKB-KW"/>
</dbReference>
<dbReference type="GO" id="GO:0004857">
    <property type="term" value="F:enzyme inhibitor activity"/>
    <property type="evidence" value="ECO:0007669"/>
    <property type="project" value="InterPro"/>
</dbReference>
<dbReference type="GO" id="GO:0030599">
    <property type="term" value="F:pectinesterase activity"/>
    <property type="evidence" value="ECO:0007669"/>
    <property type="project" value="UniProtKB-EC"/>
</dbReference>
<dbReference type="GO" id="GO:0042545">
    <property type="term" value="P:cell wall modification"/>
    <property type="evidence" value="ECO:0007669"/>
    <property type="project" value="InterPro"/>
</dbReference>
<dbReference type="GO" id="GO:0045490">
    <property type="term" value="P:pectin catabolic process"/>
    <property type="evidence" value="ECO:0007669"/>
    <property type="project" value="UniProtKB-UniPathway"/>
</dbReference>
<dbReference type="CDD" id="cd15799">
    <property type="entry name" value="PMEI-like_4"/>
    <property type="match status" value="1"/>
</dbReference>
<dbReference type="FunFam" id="2.160.20.10:FF:000001">
    <property type="entry name" value="Pectinesterase"/>
    <property type="match status" value="1"/>
</dbReference>
<dbReference type="Gene3D" id="1.20.140.40">
    <property type="entry name" value="Invertase/pectin methylesterase inhibitor family protein"/>
    <property type="match status" value="1"/>
</dbReference>
<dbReference type="Gene3D" id="2.160.20.10">
    <property type="entry name" value="Single-stranded right-handed beta-helix, Pectin lyase-like"/>
    <property type="match status" value="1"/>
</dbReference>
<dbReference type="InterPro" id="IPR035513">
    <property type="entry name" value="Invertase/methylesterase_inhib"/>
</dbReference>
<dbReference type="InterPro" id="IPR012334">
    <property type="entry name" value="Pectin_lyas_fold"/>
</dbReference>
<dbReference type="InterPro" id="IPR011050">
    <property type="entry name" value="Pectin_lyase_fold/virulence"/>
</dbReference>
<dbReference type="InterPro" id="IPR033131">
    <property type="entry name" value="Pectinesterase_Asp_AS"/>
</dbReference>
<dbReference type="InterPro" id="IPR000070">
    <property type="entry name" value="Pectinesterase_cat"/>
</dbReference>
<dbReference type="InterPro" id="IPR006501">
    <property type="entry name" value="Pectinesterase_inhib_dom"/>
</dbReference>
<dbReference type="NCBIfam" id="TIGR01614">
    <property type="entry name" value="PME_inhib"/>
    <property type="match status" value="1"/>
</dbReference>
<dbReference type="PANTHER" id="PTHR31707">
    <property type="entry name" value="PECTINESTERASE"/>
    <property type="match status" value="1"/>
</dbReference>
<dbReference type="Pfam" id="PF01095">
    <property type="entry name" value="Pectinesterase"/>
    <property type="match status" value="1"/>
</dbReference>
<dbReference type="Pfam" id="PF04043">
    <property type="entry name" value="PMEI"/>
    <property type="match status" value="1"/>
</dbReference>
<dbReference type="SMART" id="SM00856">
    <property type="entry name" value="PMEI"/>
    <property type="match status" value="1"/>
</dbReference>
<dbReference type="SUPFAM" id="SSF51126">
    <property type="entry name" value="Pectin lyase-like"/>
    <property type="match status" value="1"/>
</dbReference>
<dbReference type="SUPFAM" id="SSF101148">
    <property type="entry name" value="Plant invertase/pectin methylesterase inhibitor"/>
    <property type="match status" value="1"/>
</dbReference>
<dbReference type="PROSITE" id="PS00503">
    <property type="entry name" value="PECTINESTERASE_2"/>
    <property type="match status" value="1"/>
</dbReference>
<keyword id="KW-0063">Aspartyl esterase</keyword>
<keyword id="KW-0134">Cell wall</keyword>
<keyword id="KW-0961">Cell wall biogenesis/degradation</keyword>
<keyword id="KW-0903">Direct protein sequencing</keyword>
<keyword id="KW-1015">Disulfide bond</keyword>
<keyword id="KW-0325">Glycoprotein</keyword>
<keyword id="KW-0378">Hydrolase</keyword>
<keyword id="KW-0964">Secreted</keyword>
<keyword id="KW-0732">Signal</keyword>
<reference key="1">
    <citation type="journal article" date="2000" name="J. Agric. Food Chem.">
        <title>Cloning and expression of an acidic pectin methylesterase from jelly fig (Ficus awkeotsang).</title>
        <authorList>
            <person name="Ding J.L.C."/>
            <person name="Lee T.T.T."/>
            <person name="Wang M.M.C."/>
            <person name="Tai S.S.K."/>
            <person name="Tzen J.T.C."/>
        </authorList>
    </citation>
    <scope>NUCLEOTIDE SEQUENCE [MRNA]</scope>
    <scope>PROTEIN SEQUENCE OF 229-239</scope>
    <source>
        <tissue>Pericarp</tissue>
    </source>
</reference>
<reference key="2">
    <citation type="journal article" date="1989" name="Plant Physiol.">
        <title>Purification and characterization of pectinmethylesterase from Ficus awkeotsang makino achenes.</title>
        <authorList>
            <person name="Lin T.-P."/>
            <person name="Liu C.-C."/>
            <person name="Chen S.-W."/>
            <person name="Wang W.-Y."/>
        </authorList>
    </citation>
    <scope>PROTEIN SEQUENCE OF 229-256</scope>
    <scope>CATALYTIC ACTIVITY</scope>
    <source>
        <tissue>Pericarp</tissue>
    </source>
</reference>
<reference key="3">
    <citation type="journal article" date="2002" name="J. Agric. Food Chem.">
        <title>Purification and glycosylation analysis of an acidic pectin methylesterase in jelly fig (Ficus awkeotsang) achenes.</title>
        <authorList>
            <person name="Ding J.L.C."/>
            <person name="Hsu J.S.F."/>
            <person name="Wang M.M.C."/>
            <person name="Tzen J.T.C."/>
        </authorList>
    </citation>
    <scope>CATALYTIC ACTIVITY</scope>
    <scope>GLYCOSYLATION</scope>
    <source>
        <tissue>Pericarp</tissue>
    </source>
</reference>
<organism>
    <name type="scientific">Ficus pumila var. awkeotsang</name>
    <name type="common">Jelly fig</name>
    <name type="synonym">Ficus awkeotsang</name>
    <dbReference type="NCBI Taxonomy" id="204231"/>
    <lineage>
        <taxon>Eukaryota</taxon>
        <taxon>Viridiplantae</taxon>
        <taxon>Streptophyta</taxon>
        <taxon>Embryophyta</taxon>
        <taxon>Tracheophyta</taxon>
        <taxon>Spermatophyta</taxon>
        <taxon>Magnoliopsida</taxon>
        <taxon>eudicotyledons</taxon>
        <taxon>Gunneridae</taxon>
        <taxon>Pentapetalae</taxon>
        <taxon>rosids</taxon>
        <taxon>fabids</taxon>
        <taxon>Rosales</taxon>
        <taxon>Moraceae</taxon>
        <taxon>Ficeae</taxon>
        <taxon>Ficus</taxon>
    </lineage>
</organism>